<gene>
    <name evidence="2" type="primary">ychT</name>
    <name evidence="3" type="ordered locus">b4771</name>
</gene>
<proteinExistence type="evidence at protein level"/>
<protein>
    <recommendedName>
        <fullName evidence="2">Protein YchT</fullName>
    </recommendedName>
</protein>
<evidence type="ECO:0000269" key="1">
    <source>
    </source>
</evidence>
<evidence type="ECO:0000303" key="2">
    <source>
    </source>
</evidence>
<evidence type="ECO:0000312" key="3">
    <source>
        <dbReference type="EMBL" id="QNV50524.1"/>
    </source>
</evidence>
<name>YCHT_ECOLI</name>
<feature type="chain" id="PRO_0000447144" description="Protein YchT">
    <location>
        <begin position="1"/>
        <end position="17"/>
    </location>
</feature>
<keyword id="KW-1185">Reference proteome</keyword>
<organism>
    <name type="scientific">Escherichia coli (strain K12)</name>
    <dbReference type="NCBI Taxonomy" id="83333"/>
    <lineage>
        <taxon>Bacteria</taxon>
        <taxon>Pseudomonadati</taxon>
        <taxon>Pseudomonadota</taxon>
        <taxon>Gammaproteobacteria</taxon>
        <taxon>Enterobacterales</taxon>
        <taxon>Enterobacteriaceae</taxon>
        <taxon>Escherichia</taxon>
    </lineage>
</organism>
<accession>P0DSE9</accession>
<accession>A0A7H2C777</accession>
<dbReference type="EMBL" id="U00096">
    <property type="protein sequence ID" value="QNV50524.1"/>
    <property type="molecule type" value="Genomic_DNA"/>
</dbReference>
<dbReference type="InParanoid" id="P0DSE9"/>
<dbReference type="BioCyc" id="EcoCyc:MONOMER0-4483"/>
<dbReference type="Proteomes" id="UP000000625">
    <property type="component" value="Chromosome"/>
</dbReference>
<reference key="1">
    <citation type="journal article" date="1997" name="Science">
        <title>The complete genome sequence of Escherichia coli K-12.</title>
        <authorList>
            <person name="Blattner F.R."/>
            <person name="Plunkett G. III"/>
            <person name="Bloch C.A."/>
            <person name="Perna N.T."/>
            <person name="Burland V."/>
            <person name="Riley M."/>
            <person name="Collado-Vides J."/>
            <person name="Glasner J.D."/>
            <person name="Rode C.K."/>
            <person name="Mayhew G.F."/>
            <person name="Gregor J."/>
            <person name="Davis N.W."/>
            <person name="Kirkpatrick H.A."/>
            <person name="Goeden M.A."/>
            <person name="Rose D.J."/>
            <person name="Mau B."/>
            <person name="Shao Y."/>
        </authorList>
    </citation>
    <scope>NUCLEOTIDE SEQUENCE [LARGE SCALE GENOMIC DNA]</scope>
    <source>
        <strain>K12 / MG1655 / ATCC 47076</strain>
    </source>
</reference>
<reference key="2">
    <citation type="journal article" date="2019" name="MBio">
        <title>Identifying small proteins by ribosome profiling with stalled initiation complexes.</title>
        <authorList>
            <person name="Weaver J."/>
            <person name="Mohammad F."/>
            <person name="Buskirk A.R."/>
            <person name="Storz G."/>
        </authorList>
    </citation>
    <scope>IDENTIFICATION</scope>
    <scope>INDUCTION</scope>
    <source>
        <strain>K12 / MG1655 / ATCC 47076</strain>
    </source>
</reference>
<comment type="induction">
    <text evidence="1">Expressed at high levels equally in exponential and stationary phase in rich medium (at protein level).</text>
</comment>
<sequence length="17" mass="1882">MLSKGVLSARLFNLIYG</sequence>